<protein>
    <recommendedName>
        <fullName>P32 adhesin</fullName>
    </recommendedName>
    <alternativeName>
        <fullName>Cytadhesin P32</fullName>
    </alternativeName>
</protein>
<gene>
    <name type="ordered locus">MG318</name>
</gene>
<organism>
    <name type="scientific">Mycoplasma genitalium (strain ATCC 33530 / DSM 19775 / NCTC 10195 / G37)</name>
    <name type="common">Mycoplasmoides genitalium</name>
    <dbReference type="NCBI Taxonomy" id="243273"/>
    <lineage>
        <taxon>Bacteria</taxon>
        <taxon>Bacillati</taxon>
        <taxon>Mycoplasmatota</taxon>
        <taxon>Mycoplasmoidales</taxon>
        <taxon>Mycoplasmoidaceae</taxon>
        <taxon>Mycoplasmoides</taxon>
    </lineage>
</organism>
<evidence type="ECO:0000250" key="1"/>
<evidence type="ECO:0000255" key="2"/>
<evidence type="ECO:0000256" key="3">
    <source>
        <dbReference type="SAM" id="MobiDB-lite"/>
    </source>
</evidence>
<evidence type="ECO:0000305" key="4"/>
<sequence>MELNGFLRYKKLFIVLALLFTTILIVSLSLLAFALVVKTNGSELGVVFHQTEDNTTVIQGRSIVEQPWFIPTVAGSFGFSALAIILGLAIGLPIVKRKEKRLLEEKERQEQIAEQLQRISDQQEQQTVEIDPQQSQAQPSQPQVQQPLQPQFQQRVPLLRPAFNPNMQQRPGFNQPNQQFQPHNNFNPRMNPNMQRPGFNPNMQQRPGFNQPNQQFQPHNNFNPRMNPNMQRPGFNQPHPNQFAQPNNFNPNMQQRPGFNPNMQQRPNPSQLMPKGGLKP</sequence>
<feature type="chain" id="PRO_0000058133" description="P32 adhesin">
    <location>
        <begin position="1"/>
        <end position="280"/>
    </location>
</feature>
<feature type="transmembrane region" description="Helical" evidence="2">
    <location>
        <begin position="13"/>
        <end position="37"/>
    </location>
</feature>
<feature type="transmembrane region" description="Helical" evidence="2">
    <location>
        <begin position="68"/>
        <end position="92"/>
    </location>
</feature>
<feature type="repeat" description="1-1">
    <location>
        <begin position="163"/>
        <end position="168"/>
    </location>
</feature>
<feature type="repeat" description="2-1">
    <location>
        <begin position="170"/>
        <end position="174"/>
    </location>
</feature>
<feature type="repeat" description="3-1">
    <location>
        <begin position="186"/>
        <end position="190"/>
    </location>
</feature>
<feature type="repeat" description="1-2">
    <location>
        <begin position="191"/>
        <end position="195"/>
    </location>
</feature>
<feature type="repeat" description="2-2">
    <location>
        <begin position="196"/>
        <end position="200"/>
    </location>
</feature>
<feature type="repeat" description="1-3">
    <location>
        <begin position="199"/>
        <end position="204"/>
    </location>
</feature>
<feature type="repeat" description="2-3">
    <location>
        <begin position="206"/>
        <end position="210"/>
    </location>
</feature>
<feature type="repeat" description="3-2">
    <location>
        <begin position="222"/>
        <end position="226"/>
    </location>
</feature>
<feature type="repeat" description="1-4">
    <location>
        <begin position="227"/>
        <end position="231"/>
    </location>
</feature>
<feature type="repeat" description="2-4">
    <location>
        <begin position="232"/>
        <end position="236"/>
    </location>
</feature>
<feature type="repeat" description="1-5">
    <location>
        <begin position="249"/>
        <end position="254"/>
    </location>
</feature>
<feature type="repeat" description="2-5">
    <location>
        <begin position="256"/>
        <end position="260"/>
    </location>
</feature>
<feature type="repeat" description="1-6">
    <location>
        <begin position="259"/>
        <end position="264"/>
    </location>
</feature>
<feature type="region of interest" description="Disordered" evidence="3">
    <location>
        <begin position="114"/>
        <end position="149"/>
    </location>
</feature>
<feature type="region of interest" description="Disordered" evidence="3">
    <location>
        <begin position="163"/>
        <end position="280"/>
    </location>
</feature>
<feature type="region of interest" description="6 X 5 AA repeats of [FM]-N-P-N-M-Q">
    <location>
        <begin position="163"/>
        <end position="264"/>
    </location>
</feature>
<feature type="region of interest" description="5 X 5 AA repeats of R-P-G-F-N">
    <location>
        <begin position="170"/>
        <end position="260"/>
    </location>
</feature>
<feature type="region of interest" description="2 X 5 AA repeats of F-N-P-R-M">
    <location>
        <begin position="186"/>
        <end position="226"/>
    </location>
</feature>
<feature type="compositionally biased region" description="Polar residues" evidence="3">
    <location>
        <begin position="114"/>
        <end position="128"/>
    </location>
</feature>
<feature type="compositionally biased region" description="Low complexity" evidence="3">
    <location>
        <begin position="132"/>
        <end position="149"/>
    </location>
</feature>
<feature type="compositionally biased region" description="Low complexity" evidence="3">
    <location>
        <begin position="168"/>
        <end position="188"/>
    </location>
</feature>
<feature type="compositionally biased region" description="Low complexity" evidence="3">
    <location>
        <begin position="204"/>
        <end position="224"/>
    </location>
</feature>
<feature type="compositionally biased region" description="Low complexity" evidence="3">
    <location>
        <begin position="235"/>
        <end position="257"/>
    </location>
</feature>
<feature type="compositionally biased region" description="Polar residues" evidence="3">
    <location>
        <begin position="261"/>
        <end position="271"/>
    </location>
</feature>
<feature type="sequence conflict" description="In Ref. 1; AAA99945." evidence="4" ref="1">
    <original>L</original>
    <variation>F</variation>
    <location>
        <position position="18"/>
    </location>
</feature>
<dbReference type="EMBL" id="L43097">
    <property type="protein sequence ID" value="AAA99945.1"/>
    <property type="molecule type" value="Genomic_DNA"/>
</dbReference>
<dbReference type="EMBL" id="L43967">
    <property type="protein sequence ID" value="AAC71540.1"/>
    <property type="molecule type" value="Genomic_DNA"/>
</dbReference>
<dbReference type="PIR" id="B64235">
    <property type="entry name" value="B64235"/>
</dbReference>
<dbReference type="RefSeq" id="WP_010869427.1">
    <property type="nucleotide sequence ID" value="NC_000908.2"/>
</dbReference>
<dbReference type="SMR" id="Q49417"/>
<dbReference type="STRING" id="243273.MG_318"/>
<dbReference type="GeneID" id="88282481"/>
<dbReference type="KEGG" id="mge:MG_318"/>
<dbReference type="eggNOG" id="COG5180">
    <property type="taxonomic scope" value="Bacteria"/>
</dbReference>
<dbReference type="HOGENOM" id="CLU_086637_0_0_14"/>
<dbReference type="InParanoid" id="Q49417"/>
<dbReference type="OrthoDB" id="10020472at2"/>
<dbReference type="BioCyc" id="MGEN243273:G1GJ2-387-MONOMER"/>
<dbReference type="Proteomes" id="UP000000807">
    <property type="component" value="Chromosome"/>
</dbReference>
<dbReference type="GO" id="GO:0033111">
    <property type="term" value="C:attachment organelle membrane"/>
    <property type="evidence" value="ECO:0007669"/>
    <property type="project" value="UniProtKB-SubCell"/>
</dbReference>
<dbReference type="GO" id="GO:0042995">
    <property type="term" value="C:cell projection"/>
    <property type="evidence" value="ECO:0007669"/>
    <property type="project" value="UniProtKB-KW"/>
</dbReference>
<dbReference type="GO" id="GO:0005886">
    <property type="term" value="C:plasma membrane"/>
    <property type="evidence" value="ECO:0007669"/>
    <property type="project" value="UniProtKB-KW"/>
</dbReference>
<dbReference type="GO" id="GO:0020035">
    <property type="term" value="P:adhesion of symbiont to microvasculature"/>
    <property type="evidence" value="ECO:0007669"/>
    <property type="project" value="UniProtKB-KW"/>
</dbReference>
<dbReference type="InterPro" id="IPR009896">
    <property type="entry name" value="Cytadhesin_P30/P32"/>
</dbReference>
<dbReference type="Pfam" id="PF07271">
    <property type="entry name" value="Cytadhesin_P30"/>
    <property type="match status" value="1"/>
</dbReference>
<accession>Q49417</accession>
<accession>Q49465</accession>
<reference key="1">
    <citation type="journal article" date="1995" name="J. Bacteriol.">
        <title>Molecular cloning and characterization of an adherence-related operon of Mycoplasma genitalium.</title>
        <authorList>
            <person name="Reddy S.P."/>
            <person name="Rasmussen W.G."/>
            <person name="Baseman J.B."/>
        </authorList>
    </citation>
    <scope>NUCLEOTIDE SEQUENCE [GENOMIC DNA]</scope>
    <source>
        <strain>ATCC 33530 / DSM 19775 / NCTC 10195 / G37</strain>
    </source>
</reference>
<reference key="2">
    <citation type="journal article" date="1995" name="Science">
        <title>The minimal gene complement of Mycoplasma genitalium.</title>
        <authorList>
            <person name="Fraser C.M."/>
            <person name="Gocayne J.D."/>
            <person name="White O."/>
            <person name="Adams M.D."/>
            <person name="Clayton R.A."/>
            <person name="Fleischmann R.D."/>
            <person name="Bult C.J."/>
            <person name="Kerlavage A.R."/>
            <person name="Sutton G.G."/>
            <person name="Kelley J.M."/>
            <person name="Fritchman J.L."/>
            <person name="Weidman J.F."/>
            <person name="Small K.V."/>
            <person name="Sandusky M."/>
            <person name="Fuhrmann J.L."/>
            <person name="Nguyen D.T."/>
            <person name="Utterback T.R."/>
            <person name="Saudek D.M."/>
            <person name="Phillips C.A."/>
            <person name="Merrick J.M."/>
            <person name="Tomb J.-F."/>
            <person name="Dougherty B.A."/>
            <person name="Bott K.F."/>
            <person name="Hu P.-C."/>
            <person name="Lucier T.S."/>
            <person name="Peterson S.N."/>
            <person name="Smith H.O."/>
            <person name="Hutchison C.A. III"/>
            <person name="Venter J.C."/>
        </authorList>
    </citation>
    <scope>NUCLEOTIDE SEQUENCE [LARGE SCALE GENOMIC DNA]</scope>
    <source>
        <strain>ATCC 33530 / DSM 19775 / NCTC 10195 / G37</strain>
    </source>
</reference>
<comment type="function">
    <text>Adhesin necessary for successful cytadherence and virulence.</text>
</comment>
<comment type="subcellular location">
    <subcellularLocation>
        <location evidence="1">Cell projection</location>
        <location evidence="1">Attachment organelle membrane</location>
        <topology evidence="1">Multi-pass membrane protein</topology>
    </subcellularLocation>
    <text evidence="1">Integral and surface exposed membrane protein that localizes to the membrane at the attachment organelle.</text>
</comment>
<proteinExistence type="inferred from homology"/>
<name>P32_MYCGE</name>
<keyword id="KW-1003">Cell membrane</keyword>
<keyword id="KW-0966">Cell projection</keyword>
<keyword id="KW-0200">Cytadherence</keyword>
<keyword id="KW-0472">Membrane</keyword>
<keyword id="KW-1185">Reference proteome</keyword>
<keyword id="KW-0677">Repeat</keyword>
<keyword id="KW-0812">Transmembrane</keyword>
<keyword id="KW-1133">Transmembrane helix</keyword>
<keyword id="KW-0843">Virulence</keyword>